<dbReference type="EMBL" id="EF179444">
    <property type="protein sequence ID" value="ABM55450.1"/>
    <property type="molecule type" value="mRNA"/>
</dbReference>
<accession>A2IAD0</accession>
<comment type="function">
    <text evidence="2 3 4">Salivary protein that inhibits host voltage-gated potassium channels Kv1.1/KCNA1, Kv1.2/KCNA2 and Kv1.3/KCNA3 likely via a voltage-independent pore-blocking mechanism (PubMed:33864815, PubMed:34919963, PubMed:36692462). Suppresses expression of the Kv1.3/KCNA3 channel in lipopolysaccharide (LPS)-stimulated mouse macrophages and human T-cells (PubMed:33864815, PubMed:34919963). Down-regulates secretion of nitric oxide (NO) and inflammatory cytokines, such as TNF-alpha/TNF, IL-1beta/IL1B and IL6, in LPS-stimulated mouse macrophages in a manner dependent on Kv1.3/KCNA3 channel blockage (PubMed:33864815). Reduces activation of MAPK and NF-kappa-B signaling pathways in LPS-stimulated mouse macrophages (PubMed:33864815). Modulates intracellular Ca(2+) signaling in human PMA/ionomycin-triggered T-cells (PubMed:34919963). Interferes with the activation of the MAPK, NF-kappa-B and NFATc1 pathways in human PMA/ionomycin-triggered T-cells (PubMed:34919963). Reduces proliferation of human PMA/ionomycin-triggered T-cells (PubMed:34919963). Down-regulates secretion of cytokines, such as TNF-alpha/TNF and IL2, in human PMA/ionomycin-triggered T-cells (PubMed:34919963).</text>
</comment>
<comment type="subcellular location">
    <subcellularLocation>
        <location evidence="8">Secreted</location>
    </subcellularLocation>
</comment>
<comment type="miscellaneous">
    <text evidence="2 3 4">Exhibits anti-inflammatory effect in mouse carrageenan-induced paw edema assay (PubMed:33864815). Attenuates delayed-type hypersensitivity reactions in a rat model (PubMed:34919963). Reduces migration and invasion of NCI-H460 cancer cells (PubMed:36692462).</text>
</comment>
<name>FS48_XENCH</name>
<feature type="signal peptide" evidence="1">
    <location>
        <begin position="1"/>
        <end position="21"/>
    </location>
</feature>
<feature type="chain" id="PRO_5002644622" description="Salivary protein FS48" evidence="1">
    <location>
        <begin position="22"/>
        <end position="73"/>
    </location>
</feature>
<feature type="mutagenesis site" description="Reduces inhibitory effect on host Kv1.3/KCNA3 activity." evidence="2">
    <original>R</original>
    <variation>A</variation>
    <location>
        <position position="63"/>
    </location>
</feature>
<feature type="mutagenesis site" description="No significant effects on inhibition of host Kv1.3/KCNA3 activity." evidence="2">
    <original>R</original>
    <variation>K</variation>
    <location>
        <position position="63"/>
    </location>
</feature>
<evidence type="ECO:0000255" key="1"/>
<evidence type="ECO:0000269" key="2">
    <source>
    </source>
</evidence>
<evidence type="ECO:0000269" key="3">
    <source>
    </source>
</evidence>
<evidence type="ECO:0000269" key="4">
    <source>
    </source>
</evidence>
<evidence type="ECO:0000303" key="5">
    <source>
    </source>
</evidence>
<evidence type="ECO:0000303" key="6">
    <source>
    </source>
</evidence>
<evidence type="ECO:0000303" key="7">
    <source>
    </source>
</evidence>
<evidence type="ECO:0000305" key="8"/>
<evidence type="ECO:0000312" key="9">
    <source>
        <dbReference type="EMBL" id="ABM55450.1"/>
    </source>
</evidence>
<reference evidence="9" key="1">
    <citation type="journal article" date="2007" name="BMC Genomics">
        <title>An insight into the sialome of the oriental rat flea, Xenopsylla cheopis (Rots).</title>
        <authorList>
            <person name="Andersen J.F."/>
            <person name="Hinnebusch B.J."/>
            <person name="Lucas D.A."/>
            <person name="Conrads T.P."/>
            <person name="Veenstra T.D."/>
            <person name="Pham V.M."/>
            <person name="Ribeiro J.M."/>
        </authorList>
    </citation>
    <scope>NUCLEOTIDE SEQUENCE [LARGE SCALE MRNA]</scope>
    <source>
        <tissue evidence="9">Salivary gland</tissue>
    </source>
</reference>
<reference evidence="8" key="2">
    <citation type="journal article" date="2021" name="J. Biol. Chem.">
        <title>Anti-inflammatory effects of FS48, the first potassium channel inhibitor from the salivary glands of the flea Xenopsylla cheopis.</title>
        <authorList>
            <person name="Deng Z."/>
            <person name="Zeng Q."/>
            <person name="Tang J."/>
            <person name="Zhang B."/>
            <person name="Chai J."/>
            <person name="Andersen J.F."/>
            <person name="Chen X."/>
            <person name="Xu X."/>
        </authorList>
    </citation>
    <scope>FUNCTION</scope>
    <scope>MUTAGENESIS OF ARG-63</scope>
</reference>
<reference evidence="8" key="3">
    <citation type="journal article" date="2022" name="J. Biol. Chem.">
        <title>The toxin mimic FS48 from the salivary gland of Xenopsylla cheopis functions as a Kv1.3 channel-blocking immunomodulator of T cell activation.</title>
        <authorList>
            <person name="Zeng Q."/>
            <person name="Lu W."/>
            <person name="Deng Z."/>
            <person name="Zhang B."/>
            <person name="Wu J."/>
            <person name="Chai J."/>
            <person name="Chen X."/>
            <person name="Xu X."/>
        </authorList>
    </citation>
    <scope>FUNCTION</scope>
</reference>
<reference evidence="8" key="4">
    <citation type="journal article" date="2023" name="Acta Pharm.">
        <title>The in vitro anticancer effects of FS48 from salivary glands of Xenopsylla cheopis on NCI-H460 cells via its blockage of voltage-gated K+ channels.</title>
        <authorList>
            <person name="Xiong W."/>
            <person name="Fan H."/>
            <person name="Zeng Q."/>
            <person name="Deng Z."/>
            <person name="Li G."/>
            <person name="Lu W."/>
            <person name="Zhang B."/>
            <person name="Lai S."/>
            <person name="Chen X."/>
            <person name="Xu X."/>
        </authorList>
    </citation>
    <scope>FUNCTION</scope>
</reference>
<organism>
    <name type="scientific">Xenopsylla cheopis</name>
    <name type="common">Oriental rat flea</name>
    <name type="synonym">Pulex cheopis</name>
    <dbReference type="NCBI Taxonomy" id="163159"/>
    <lineage>
        <taxon>Eukaryota</taxon>
        <taxon>Metazoa</taxon>
        <taxon>Ecdysozoa</taxon>
        <taxon>Arthropoda</taxon>
        <taxon>Hexapoda</taxon>
        <taxon>Insecta</taxon>
        <taxon>Pterygota</taxon>
        <taxon>Neoptera</taxon>
        <taxon>Endopterygota</taxon>
        <taxon>Siphonaptera</taxon>
        <taxon>Pulicidae</taxon>
        <taxon>Xenopsyllinae</taxon>
        <taxon>Xenopsylla</taxon>
    </lineage>
</organism>
<keyword id="KW-0872">Ion channel impairing toxin</keyword>
<keyword id="KW-0632">Potassium channel impairing toxin</keyword>
<keyword id="KW-0964">Secreted</keyword>
<keyword id="KW-0732">Signal</keyword>
<keyword id="KW-0800">Toxin</keyword>
<keyword id="KW-1220">Voltage-gated potassium channel impairing toxin</keyword>
<proteinExistence type="evidence at protein level"/>
<protein>
    <recommendedName>
        <fullName evidence="5 6 7">Salivary protein FS48</fullName>
        <shortName evidence="5 6 7">FS48</shortName>
    </recommendedName>
</protein>
<sequence>MKFAFAIFVVLAILHTELISATEYKCKVTGTGDMTIPFGCKDGNDVQGCKKLCQEKCKYTTTRQSCVGKKCYC</sequence>